<gene>
    <name evidence="1" type="primary">erpA</name>
    <name type="ordered locus">azo2758</name>
</gene>
<feature type="chain" id="PRO_0000311444" description="Putative iron-sulfur cluster insertion protein ErpA">
    <location>
        <begin position="1"/>
        <end position="116"/>
    </location>
</feature>
<feature type="binding site" evidence="1">
    <location>
        <position position="44"/>
    </location>
    <ligand>
        <name>iron-sulfur cluster</name>
        <dbReference type="ChEBI" id="CHEBI:30408"/>
    </ligand>
</feature>
<feature type="binding site" evidence="1">
    <location>
        <position position="108"/>
    </location>
    <ligand>
        <name>iron-sulfur cluster</name>
        <dbReference type="ChEBI" id="CHEBI:30408"/>
    </ligand>
</feature>
<feature type="binding site" evidence="1">
    <location>
        <position position="110"/>
    </location>
    <ligand>
        <name>iron-sulfur cluster</name>
        <dbReference type="ChEBI" id="CHEBI:30408"/>
    </ligand>
</feature>
<protein>
    <recommendedName>
        <fullName evidence="1">Putative iron-sulfur cluster insertion protein ErpA</fullName>
    </recommendedName>
</protein>
<accession>A1K969</accession>
<name>ERPA_AZOSB</name>
<proteinExistence type="inferred from homology"/>
<dbReference type="EMBL" id="AM406670">
    <property type="protein sequence ID" value="CAL95374.1"/>
    <property type="molecule type" value="Genomic_DNA"/>
</dbReference>
<dbReference type="RefSeq" id="WP_011766484.1">
    <property type="nucleotide sequence ID" value="NC_008702.1"/>
</dbReference>
<dbReference type="SMR" id="A1K969"/>
<dbReference type="STRING" id="62928.azo2758"/>
<dbReference type="KEGG" id="aoa:dqs_2893"/>
<dbReference type="KEGG" id="azo:azo2758"/>
<dbReference type="eggNOG" id="COG0316">
    <property type="taxonomic scope" value="Bacteria"/>
</dbReference>
<dbReference type="HOGENOM" id="CLU_069054_5_3_4"/>
<dbReference type="OrthoDB" id="9801228at2"/>
<dbReference type="Proteomes" id="UP000002588">
    <property type="component" value="Chromosome"/>
</dbReference>
<dbReference type="GO" id="GO:0051537">
    <property type="term" value="F:2 iron, 2 sulfur cluster binding"/>
    <property type="evidence" value="ECO:0007669"/>
    <property type="project" value="TreeGrafter"/>
</dbReference>
<dbReference type="GO" id="GO:0051539">
    <property type="term" value="F:4 iron, 4 sulfur cluster binding"/>
    <property type="evidence" value="ECO:0007669"/>
    <property type="project" value="TreeGrafter"/>
</dbReference>
<dbReference type="GO" id="GO:0005506">
    <property type="term" value="F:iron ion binding"/>
    <property type="evidence" value="ECO:0007669"/>
    <property type="project" value="UniProtKB-UniRule"/>
</dbReference>
<dbReference type="GO" id="GO:0016226">
    <property type="term" value="P:iron-sulfur cluster assembly"/>
    <property type="evidence" value="ECO:0007669"/>
    <property type="project" value="UniProtKB-UniRule"/>
</dbReference>
<dbReference type="FunFam" id="2.60.300.12:FF:000002">
    <property type="entry name" value="Iron-sulfur cluster insertion protein ErpA"/>
    <property type="match status" value="1"/>
</dbReference>
<dbReference type="Gene3D" id="2.60.300.12">
    <property type="entry name" value="HesB-like domain"/>
    <property type="match status" value="1"/>
</dbReference>
<dbReference type="HAMAP" id="MF_01380">
    <property type="entry name" value="Fe_S_insert_ErpA"/>
    <property type="match status" value="1"/>
</dbReference>
<dbReference type="InterPro" id="IPR000361">
    <property type="entry name" value="FeS_biogenesis"/>
</dbReference>
<dbReference type="InterPro" id="IPR016092">
    <property type="entry name" value="FeS_cluster_insertion"/>
</dbReference>
<dbReference type="InterPro" id="IPR017870">
    <property type="entry name" value="FeS_cluster_insertion_CS"/>
</dbReference>
<dbReference type="InterPro" id="IPR023063">
    <property type="entry name" value="FeS_cluster_insertion_RrpA"/>
</dbReference>
<dbReference type="InterPro" id="IPR035903">
    <property type="entry name" value="HesB-like_dom_sf"/>
</dbReference>
<dbReference type="NCBIfam" id="TIGR00049">
    <property type="entry name" value="iron-sulfur cluster assembly accessory protein"/>
    <property type="match status" value="1"/>
</dbReference>
<dbReference type="NCBIfam" id="NF010147">
    <property type="entry name" value="PRK13623.1"/>
    <property type="match status" value="1"/>
</dbReference>
<dbReference type="PANTHER" id="PTHR43011">
    <property type="entry name" value="IRON-SULFUR CLUSTER ASSEMBLY 2 HOMOLOG, MITOCHONDRIAL"/>
    <property type="match status" value="1"/>
</dbReference>
<dbReference type="PANTHER" id="PTHR43011:SF1">
    <property type="entry name" value="IRON-SULFUR CLUSTER ASSEMBLY 2 HOMOLOG, MITOCHONDRIAL"/>
    <property type="match status" value="1"/>
</dbReference>
<dbReference type="Pfam" id="PF01521">
    <property type="entry name" value="Fe-S_biosyn"/>
    <property type="match status" value="1"/>
</dbReference>
<dbReference type="SUPFAM" id="SSF89360">
    <property type="entry name" value="HesB-like domain"/>
    <property type="match status" value="1"/>
</dbReference>
<dbReference type="PROSITE" id="PS01152">
    <property type="entry name" value="HESB"/>
    <property type="match status" value="1"/>
</dbReference>
<keyword id="KW-0408">Iron</keyword>
<keyword id="KW-0411">Iron-sulfur</keyword>
<keyword id="KW-0479">Metal-binding</keyword>
<keyword id="KW-1185">Reference proteome</keyword>
<comment type="function">
    <text evidence="1">Required for insertion of 4Fe-4S clusters.</text>
</comment>
<comment type="cofactor">
    <cofactor evidence="1">
        <name>iron-sulfur cluster</name>
        <dbReference type="ChEBI" id="CHEBI:30408"/>
    </cofactor>
    <text evidence="1">Binds 1 iron-sulfur cluster per subunit.</text>
</comment>
<comment type="subunit">
    <text evidence="1">Homodimer.</text>
</comment>
<comment type="similarity">
    <text evidence="1">Belongs to the HesB/IscA family.</text>
</comment>
<organism>
    <name type="scientific">Azoarcus sp. (strain BH72)</name>
    <dbReference type="NCBI Taxonomy" id="418699"/>
    <lineage>
        <taxon>Bacteria</taxon>
        <taxon>Pseudomonadati</taxon>
        <taxon>Pseudomonadota</taxon>
        <taxon>Betaproteobacteria</taxon>
        <taxon>Rhodocyclales</taxon>
        <taxon>Zoogloeaceae</taxon>
        <taxon>Azoarcus</taxon>
    </lineage>
</organism>
<reference key="1">
    <citation type="journal article" date="2006" name="Nat. Biotechnol.">
        <title>Complete genome of the mutualistic, N2-fixing grass endophyte Azoarcus sp. strain BH72.</title>
        <authorList>
            <person name="Krause A."/>
            <person name="Ramakumar A."/>
            <person name="Bartels D."/>
            <person name="Battistoni F."/>
            <person name="Bekel T."/>
            <person name="Boch J."/>
            <person name="Boehm M."/>
            <person name="Friedrich F."/>
            <person name="Hurek T."/>
            <person name="Krause L."/>
            <person name="Linke B."/>
            <person name="McHardy A.C."/>
            <person name="Sarkar A."/>
            <person name="Schneiker S."/>
            <person name="Syed A.A."/>
            <person name="Thauer R."/>
            <person name="Vorhoelter F.-J."/>
            <person name="Weidner S."/>
            <person name="Puehler A."/>
            <person name="Reinhold-Hurek B."/>
            <person name="Kaiser O."/>
            <person name="Goesmann A."/>
        </authorList>
    </citation>
    <scope>NUCLEOTIDE SEQUENCE [LARGE SCALE GENOMIC DNA]</scope>
    <source>
        <strain>BH72</strain>
    </source>
</reference>
<evidence type="ECO:0000255" key="1">
    <source>
        <dbReference type="HAMAP-Rule" id="MF_01380"/>
    </source>
</evidence>
<sequence length="116" mass="12521">MNAAVETPEILVFTDNAANKVRELIDEEGNPALKLRVFVTGGGCSGFQYGFTFDEEVNEDDTAFEKNGVTLLIDPMSYQYLVGAEIDYTEGLEGSQFVIRNPNATSTCGCGSSFSA</sequence>